<sequence>MASTPRTPAPVRSPPPVPTPTHPTPPPPPLETPQPPLPVSTPPPALETPPPRRVRTPPPPLETPPPPSPSSSQPGDEYHTPAPSLADGSPREEEASFPSDGREGGGAPAPPKSPQLSPMRLAAPRLLLPPPSPRTPTGQNGQEEQEGGAKAAAAGAGTGTGTAAPARQQLRLTGLARSPSSQRSLATTNSSPSPSPSPTPPSPLTPAAAPVVNNNSNNKNNRSGQSTPKRAAETKLPLSSPAATATIAVQHFNPVEEAVTSPLHLGIGKAQRLDHHQHQHQQRQEQHAAAAAVENGGSVPPDVAAAVAVGERRELSVTLRLATAVLSLAAFSVIASARTSGWAGDYYAHHLQYRYAVAVNVIVCAYSIAQSFGEIRRLISPRFIFRSMSSYYCSLFLDQALAYLLMSASSAAASRNDLWVSRFGTDAFNRKITSALWLSFIAFLMLALNALISTANLFSML</sequence>
<dbReference type="EMBL" id="CM000762">
    <property type="protein sequence ID" value="EES03337.1"/>
    <property type="molecule type" value="Genomic_DNA"/>
</dbReference>
<dbReference type="RefSeq" id="XP_002458217.1">
    <property type="nucleotide sequence ID" value="XM_002458172.1"/>
</dbReference>
<dbReference type="STRING" id="4558.C5XEK4"/>
<dbReference type="EnsemblPlants" id="EES03337">
    <property type="protein sequence ID" value="EES03337"/>
    <property type="gene ID" value="SORBI_3003G234800"/>
</dbReference>
<dbReference type="Gramene" id="EES03337">
    <property type="protein sequence ID" value="EES03337"/>
    <property type="gene ID" value="SORBI_3003G234800"/>
</dbReference>
<dbReference type="KEGG" id="sbi:8058222"/>
<dbReference type="eggNOG" id="ENOG502QW75">
    <property type="taxonomic scope" value="Eukaryota"/>
</dbReference>
<dbReference type="HOGENOM" id="CLU_046935_0_0_1"/>
<dbReference type="InParanoid" id="C5XEK4"/>
<dbReference type="OMA" id="HHLQYRY"/>
<dbReference type="OrthoDB" id="672180at2759"/>
<dbReference type="Proteomes" id="UP000000768">
    <property type="component" value="Chromosome 3"/>
</dbReference>
<dbReference type="GO" id="GO:0005886">
    <property type="term" value="C:plasma membrane"/>
    <property type="evidence" value="ECO:0007669"/>
    <property type="project" value="UniProtKB-SubCell"/>
</dbReference>
<dbReference type="InterPro" id="IPR006702">
    <property type="entry name" value="CASP_dom"/>
</dbReference>
<dbReference type="PANTHER" id="PTHR33573">
    <property type="entry name" value="CASP-LIKE PROTEIN 4A4"/>
    <property type="match status" value="1"/>
</dbReference>
<dbReference type="PANTHER" id="PTHR33573:SF35">
    <property type="entry name" value="CASP-LIKE PROTEIN 4U1"/>
    <property type="match status" value="1"/>
</dbReference>
<dbReference type="Pfam" id="PF04535">
    <property type="entry name" value="CASP_dom"/>
    <property type="match status" value="1"/>
</dbReference>
<dbReference type="PRINTS" id="PR01217">
    <property type="entry name" value="PRICHEXTENSN"/>
</dbReference>
<protein>
    <recommendedName>
        <fullName>CASP-like protein 4U1</fullName>
        <shortName>SbCASPL4U1</shortName>
    </recommendedName>
</protein>
<proteinExistence type="evidence at transcript level"/>
<organism>
    <name type="scientific">Sorghum bicolor</name>
    <name type="common">Sorghum</name>
    <name type="synonym">Sorghum vulgare</name>
    <dbReference type="NCBI Taxonomy" id="4558"/>
    <lineage>
        <taxon>Eukaryota</taxon>
        <taxon>Viridiplantae</taxon>
        <taxon>Streptophyta</taxon>
        <taxon>Embryophyta</taxon>
        <taxon>Tracheophyta</taxon>
        <taxon>Spermatophyta</taxon>
        <taxon>Magnoliopsida</taxon>
        <taxon>Liliopsida</taxon>
        <taxon>Poales</taxon>
        <taxon>Poaceae</taxon>
        <taxon>PACMAD clade</taxon>
        <taxon>Panicoideae</taxon>
        <taxon>Andropogonodae</taxon>
        <taxon>Andropogoneae</taxon>
        <taxon>Sorghinae</taxon>
        <taxon>Sorghum</taxon>
    </lineage>
</organism>
<reference key="1">
    <citation type="journal article" date="2009" name="Nature">
        <title>The Sorghum bicolor genome and the diversification of grasses.</title>
        <authorList>
            <person name="Paterson A.H."/>
            <person name="Bowers J.E."/>
            <person name="Bruggmann R."/>
            <person name="Dubchak I."/>
            <person name="Grimwood J."/>
            <person name="Gundlach H."/>
            <person name="Haberer G."/>
            <person name="Hellsten U."/>
            <person name="Mitros T."/>
            <person name="Poliakov A."/>
            <person name="Schmutz J."/>
            <person name="Spannagl M."/>
            <person name="Tang H."/>
            <person name="Wang X."/>
            <person name="Wicker T."/>
            <person name="Bharti A.K."/>
            <person name="Chapman J."/>
            <person name="Feltus F.A."/>
            <person name="Gowik U."/>
            <person name="Grigoriev I.V."/>
            <person name="Lyons E."/>
            <person name="Maher C.A."/>
            <person name="Martis M."/>
            <person name="Narechania A."/>
            <person name="Otillar R.P."/>
            <person name="Penning B.W."/>
            <person name="Salamov A.A."/>
            <person name="Wang Y."/>
            <person name="Zhang L."/>
            <person name="Carpita N.C."/>
            <person name="Freeling M."/>
            <person name="Gingle A.R."/>
            <person name="Hash C.T."/>
            <person name="Keller B."/>
            <person name="Klein P."/>
            <person name="Kresovich S."/>
            <person name="McCann M.C."/>
            <person name="Ming R."/>
            <person name="Peterson D.G."/>
            <person name="Mehboob-ur-Rahman M."/>
            <person name="Ware D."/>
            <person name="Westhoff P."/>
            <person name="Mayer K.F.X."/>
            <person name="Messing J."/>
            <person name="Rokhsar D.S."/>
        </authorList>
    </citation>
    <scope>NUCLEOTIDE SEQUENCE [LARGE SCALE GENOMIC DNA]</scope>
    <source>
        <strain>cv. BTx623</strain>
    </source>
</reference>
<reference key="2">
    <citation type="journal article" date="2018" name="Plant J.">
        <title>The Sorghum bicolor reference genome: improved assembly, gene annotations, a transcriptome atlas, and signatures of genome organization.</title>
        <authorList>
            <person name="McCormick R.F."/>
            <person name="Truong S.K."/>
            <person name="Sreedasyam A."/>
            <person name="Jenkins J."/>
            <person name="Shu S."/>
            <person name="Sims D."/>
            <person name="Kennedy M."/>
            <person name="Amirebrahimi M."/>
            <person name="Weers B.D."/>
            <person name="McKinley B."/>
            <person name="Mattison A."/>
            <person name="Morishige D.T."/>
            <person name="Grimwood J."/>
            <person name="Schmutz J."/>
            <person name="Mullet J.E."/>
        </authorList>
    </citation>
    <scope>GENOME REANNOTATION</scope>
    <source>
        <strain>cv. BTx623</strain>
    </source>
</reference>
<reference key="3">
    <citation type="journal article" date="2014" name="Plant Physiol.">
        <title>Functional and evolutionary analysis of the CASPARIAN STRIP MEMBRANE DOMAIN PROTEIN family.</title>
        <authorList>
            <person name="Roppolo D."/>
            <person name="Boeckmann B."/>
            <person name="Pfister A."/>
            <person name="Boutet E."/>
            <person name="Rubio M.C."/>
            <person name="Denervaud-Tendon V."/>
            <person name="Vermeer J.E."/>
            <person name="Gheyselinck J."/>
            <person name="Xenarios I."/>
            <person name="Geldner N."/>
        </authorList>
    </citation>
    <scope>GENE FAMILY</scope>
    <scope>NOMENCLATURE</scope>
</reference>
<comment type="subunit">
    <text evidence="1">Homodimer and heterodimers.</text>
</comment>
<comment type="subcellular location">
    <subcellularLocation>
        <location evidence="1">Cell membrane</location>
        <topology evidence="1">Multi-pass membrane protein</topology>
    </subcellularLocation>
</comment>
<comment type="similarity">
    <text evidence="4">Belongs to the Casparian strip membrane proteins (CASP) family.</text>
</comment>
<name>CSPL7_SORBI</name>
<keyword id="KW-1003">Cell membrane</keyword>
<keyword id="KW-0472">Membrane</keyword>
<keyword id="KW-1185">Reference proteome</keyword>
<keyword id="KW-0812">Transmembrane</keyword>
<keyword id="KW-1133">Transmembrane helix</keyword>
<evidence type="ECO:0000250" key="1"/>
<evidence type="ECO:0000255" key="2"/>
<evidence type="ECO:0000256" key="3">
    <source>
        <dbReference type="SAM" id="MobiDB-lite"/>
    </source>
</evidence>
<evidence type="ECO:0000305" key="4"/>
<accession>C5XEK4</accession>
<feature type="chain" id="PRO_0000391518" description="CASP-like protein 4U1">
    <location>
        <begin position="1"/>
        <end position="461"/>
    </location>
</feature>
<feature type="topological domain" description="Cytoplasmic" evidence="2">
    <location>
        <begin position="1"/>
        <end position="314"/>
    </location>
</feature>
<feature type="transmembrane region" description="Helical" evidence="2">
    <location>
        <begin position="315"/>
        <end position="335"/>
    </location>
</feature>
<feature type="topological domain" description="Extracellular" evidence="2">
    <location>
        <begin position="336"/>
        <end position="354"/>
    </location>
</feature>
<feature type="transmembrane region" description="Helical" evidence="2">
    <location>
        <begin position="355"/>
        <end position="375"/>
    </location>
</feature>
<feature type="topological domain" description="Cytoplasmic" evidence="2">
    <location>
        <begin position="376"/>
        <end position="392"/>
    </location>
</feature>
<feature type="transmembrane region" description="Helical" evidence="2">
    <location>
        <begin position="393"/>
        <end position="413"/>
    </location>
</feature>
<feature type="topological domain" description="Extracellular" evidence="2">
    <location>
        <begin position="414"/>
        <end position="431"/>
    </location>
</feature>
<feature type="transmembrane region" description="Helical" evidence="2">
    <location>
        <begin position="432"/>
        <end position="452"/>
    </location>
</feature>
<feature type="topological domain" description="Cytoplasmic" evidence="2">
    <location>
        <begin position="453"/>
        <end position="461"/>
    </location>
</feature>
<feature type="region of interest" description="Disordered" evidence="3">
    <location>
        <begin position="1"/>
        <end position="239"/>
    </location>
</feature>
<feature type="compositionally biased region" description="Pro residues" evidence="3">
    <location>
        <begin position="7"/>
        <end position="69"/>
    </location>
</feature>
<feature type="compositionally biased region" description="Low complexity" evidence="3">
    <location>
        <begin position="116"/>
        <end position="126"/>
    </location>
</feature>
<feature type="compositionally biased region" description="Low complexity" evidence="3">
    <location>
        <begin position="135"/>
        <end position="155"/>
    </location>
</feature>
<feature type="compositionally biased region" description="Pro residues" evidence="3">
    <location>
        <begin position="193"/>
        <end position="204"/>
    </location>
</feature>
<feature type="compositionally biased region" description="Low complexity" evidence="3">
    <location>
        <begin position="205"/>
        <end position="221"/>
    </location>
</feature>
<gene>
    <name type="ordered locus">Sb03g029220</name>
</gene>